<comment type="function">
    <text evidence="1">Antibacterial activity against X.campestris, especially strain G, and P.solacearum PO1.</text>
</comment>
<comment type="miscellaneous">
    <text evidence="1">On a 2D-GEL the determined pI of this protein is: 9.12.</text>
</comment>
<dbReference type="GO" id="GO:0005576">
    <property type="term" value="C:extracellular region"/>
    <property type="evidence" value="ECO:0000314"/>
    <property type="project" value="UniProtKB"/>
</dbReference>
<dbReference type="GO" id="GO:0042742">
    <property type="term" value="P:defense response to bacterium"/>
    <property type="evidence" value="ECO:0000314"/>
    <property type="project" value="UniProtKB"/>
</dbReference>
<evidence type="ECO:0000269" key="1">
    <source>
    </source>
</evidence>
<evidence type="ECO:0000303" key="2">
    <source>
    </source>
</evidence>
<evidence type="ECO:0000305" key="3"/>
<name>LC3_BACIU</name>
<reference evidence="3" key="1">
    <citation type="journal article" date="1992" name="Chin. J. Biotechnol.">
        <title>Purification and partial characterization of an antibacterial protein LCIII.</title>
        <authorList>
            <person name="Liu J."/>
            <person name="Li Z."/>
            <person name="Pan N."/>
            <person name="Chen Z."/>
        </authorList>
    </citation>
    <scope>PROTEIN SEQUENCE</scope>
    <scope>FUNCTION</scope>
    <source>
        <strain evidence="1">A014</strain>
    </source>
</reference>
<protein>
    <recommendedName>
        <fullName>Antibacterial protein LC3</fullName>
    </recommendedName>
    <alternativeName>
        <fullName>Antibacterial protein LCIII</fullName>
    </alternativeName>
</protein>
<accession>Q9R5C6</accession>
<feature type="chain" id="PRO_0000076229" description="Antibacterial protein LC3">
    <location>
        <begin position="1"/>
        <end position="28" status="greater than"/>
    </location>
</feature>
<feature type="non-terminal residue" evidence="2">
    <location>
        <position position="28"/>
    </location>
</feature>
<sequence length="28" mass="2858">ASGGTVGXYGAWMRSXSLVSXSTITTFS</sequence>
<proteinExistence type="evidence at protein level"/>
<keyword id="KW-0044">Antibiotic</keyword>
<keyword id="KW-0929">Antimicrobial</keyword>
<keyword id="KW-0903">Direct protein sequencing</keyword>
<organism>
    <name type="scientific">Bacillus subtilis</name>
    <dbReference type="NCBI Taxonomy" id="1423"/>
    <lineage>
        <taxon>Bacteria</taxon>
        <taxon>Bacillati</taxon>
        <taxon>Bacillota</taxon>
        <taxon>Bacilli</taxon>
        <taxon>Bacillales</taxon>
        <taxon>Bacillaceae</taxon>
        <taxon>Bacillus</taxon>
    </lineage>
</organism>